<reference key="1">
    <citation type="submission" date="2008-05" db="EMBL/GenBank/DDBJ databases">
        <title>Complete sequence of Shigella boydii serotype 18 strain BS512.</title>
        <authorList>
            <person name="Rasko D.A."/>
            <person name="Rosovitz M."/>
            <person name="Maurelli A.T."/>
            <person name="Myers G."/>
            <person name="Seshadri R."/>
            <person name="Cer R."/>
            <person name="Jiang L."/>
            <person name="Ravel J."/>
            <person name="Sebastian Y."/>
        </authorList>
    </citation>
    <scope>NUCLEOTIDE SEQUENCE [LARGE SCALE GENOMIC DNA]</scope>
    <source>
        <strain>CDC 3083-94 / BS512</strain>
    </source>
</reference>
<feature type="chain" id="PRO_1000201559" description="Vitamin B12 import system permease protein BtuC">
    <location>
        <begin position="1"/>
        <end position="326"/>
    </location>
</feature>
<feature type="transmembrane region" description="Helical" evidence="1">
    <location>
        <begin position="15"/>
        <end position="35"/>
    </location>
</feature>
<feature type="transmembrane region" description="Helical" evidence="1">
    <location>
        <begin position="61"/>
        <end position="81"/>
    </location>
</feature>
<feature type="transmembrane region" description="Helical" evidence="1">
    <location>
        <begin position="88"/>
        <end position="108"/>
    </location>
</feature>
<feature type="transmembrane region" description="Helical" evidence="1">
    <location>
        <begin position="112"/>
        <end position="132"/>
    </location>
</feature>
<feature type="transmembrane region" description="Helical" evidence="1">
    <location>
        <begin position="146"/>
        <end position="166"/>
    </location>
</feature>
<feature type="transmembrane region" description="Helical" evidence="1">
    <location>
        <begin position="184"/>
        <end position="204"/>
    </location>
</feature>
<feature type="transmembrane region" description="Helical" evidence="1">
    <location>
        <begin position="240"/>
        <end position="260"/>
    </location>
</feature>
<feature type="transmembrane region" description="Helical" evidence="1">
    <location>
        <begin position="274"/>
        <end position="294"/>
    </location>
</feature>
<feature type="transmembrane region" description="Helical" evidence="1">
    <location>
        <begin position="302"/>
        <end position="322"/>
    </location>
</feature>
<comment type="function">
    <text evidence="1">Part of the ABC transporter complex BtuCDF involved in vitamin B12 import. Involved in the translocation of the substrate across the membrane.</text>
</comment>
<comment type="subunit">
    <text evidence="1">The complex is composed of two ATP-binding proteins (BtuD), two transmembrane proteins (BtuC) and a solute-binding protein (BtuF).</text>
</comment>
<comment type="subcellular location">
    <subcellularLocation>
        <location evidence="1">Cell inner membrane</location>
        <topology evidence="1">Multi-pass membrane protein</topology>
    </subcellularLocation>
</comment>
<comment type="similarity">
    <text evidence="1">Belongs to the binding-protein-dependent transport system permease family. FecCD subfamily.</text>
</comment>
<protein>
    <recommendedName>
        <fullName evidence="1">Vitamin B12 import system permease protein BtuC</fullName>
    </recommendedName>
</protein>
<accession>B2U360</accession>
<evidence type="ECO:0000255" key="1">
    <source>
        <dbReference type="HAMAP-Rule" id="MF_01004"/>
    </source>
</evidence>
<dbReference type="EMBL" id="CP001063">
    <property type="protein sequence ID" value="ACD08098.1"/>
    <property type="molecule type" value="Genomic_DNA"/>
</dbReference>
<dbReference type="RefSeq" id="WP_000956508.1">
    <property type="nucleotide sequence ID" value="NC_010658.1"/>
</dbReference>
<dbReference type="SMR" id="B2U360"/>
<dbReference type="STRING" id="344609.SbBS512_E1915"/>
<dbReference type="KEGG" id="sbc:SbBS512_E1915"/>
<dbReference type="HOGENOM" id="CLU_013016_0_3_6"/>
<dbReference type="Proteomes" id="UP000001030">
    <property type="component" value="Chromosome"/>
</dbReference>
<dbReference type="GO" id="GO:0005886">
    <property type="term" value="C:plasma membrane"/>
    <property type="evidence" value="ECO:0007669"/>
    <property type="project" value="UniProtKB-SubCell"/>
</dbReference>
<dbReference type="GO" id="GO:0090482">
    <property type="term" value="F:vitamin transmembrane transporter activity"/>
    <property type="evidence" value="ECO:0007669"/>
    <property type="project" value="UniProtKB-UniRule"/>
</dbReference>
<dbReference type="GO" id="GO:0015889">
    <property type="term" value="P:cobalamin transport"/>
    <property type="evidence" value="ECO:0007669"/>
    <property type="project" value="UniProtKB-UniRule"/>
</dbReference>
<dbReference type="CDD" id="cd06550">
    <property type="entry name" value="TM_ABC_iron-siderophores_like"/>
    <property type="match status" value="1"/>
</dbReference>
<dbReference type="FunFam" id="1.10.3470.10:FF:000001">
    <property type="entry name" value="Vitamin B12 ABC transporter permease BtuC"/>
    <property type="match status" value="1"/>
</dbReference>
<dbReference type="Gene3D" id="1.10.3470.10">
    <property type="entry name" value="ABC transporter involved in vitamin B12 uptake, BtuC"/>
    <property type="match status" value="1"/>
</dbReference>
<dbReference type="HAMAP" id="MF_01004">
    <property type="entry name" value="BtuC"/>
    <property type="match status" value="1"/>
</dbReference>
<dbReference type="InterPro" id="IPR037294">
    <property type="entry name" value="ABC_BtuC-like"/>
</dbReference>
<dbReference type="InterPro" id="IPR023691">
    <property type="entry name" value="ABC_transptr_BtuC"/>
</dbReference>
<dbReference type="InterPro" id="IPR000522">
    <property type="entry name" value="ABC_transptr_permease_BtuC"/>
</dbReference>
<dbReference type="NCBIfam" id="NF003001">
    <property type="entry name" value="PRK03784.1"/>
    <property type="match status" value="1"/>
</dbReference>
<dbReference type="PANTHER" id="PTHR30472">
    <property type="entry name" value="FERRIC ENTEROBACTIN TRANSPORT SYSTEM PERMEASE PROTEIN"/>
    <property type="match status" value="1"/>
</dbReference>
<dbReference type="PANTHER" id="PTHR30472:SF29">
    <property type="entry name" value="VITAMIN B12 IMPORT SYSTEM PERMEASE PROTEIN BTUC"/>
    <property type="match status" value="1"/>
</dbReference>
<dbReference type="Pfam" id="PF01032">
    <property type="entry name" value="FecCD"/>
    <property type="match status" value="1"/>
</dbReference>
<dbReference type="SUPFAM" id="SSF81345">
    <property type="entry name" value="ABC transporter involved in vitamin B12 uptake, BtuC"/>
    <property type="match status" value="1"/>
</dbReference>
<organism>
    <name type="scientific">Shigella boydii serotype 18 (strain CDC 3083-94 / BS512)</name>
    <dbReference type="NCBI Taxonomy" id="344609"/>
    <lineage>
        <taxon>Bacteria</taxon>
        <taxon>Pseudomonadati</taxon>
        <taxon>Pseudomonadota</taxon>
        <taxon>Gammaproteobacteria</taxon>
        <taxon>Enterobacterales</taxon>
        <taxon>Enterobacteriaceae</taxon>
        <taxon>Shigella</taxon>
    </lineage>
</organism>
<name>BTUC_SHIB3</name>
<sequence length="326" mass="35064">MLTLARQQQRQNIRWLLCLSVLMLLALLLSLCAGEQWISLGDWFTPRGELFVWQIRLPRTLAVLLVGAALAISGAVMQALFENPLAEPGLLGVSNGAGVGLIAAVLLGQGQLPNWALGLCAIAGALIITLILLRFARRHLSTSRLLLAGVALGIICSALMTWAIYFSTSVDLRQLMYWMMGGFGGVDWRQSWLMLALIPVLLWICCQSRPMNMLALGEISARQLGLPLWFWRNVLVAATGWMVGVSVALAGAIGFIGLVIPHILRLCGLTDHRVLLPGCALAGASALLLADIVARLALAAAELPIGVVTATLGAPVFIWLLLKARR</sequence>
<keyword id="KW-0997">Cell inner membrane</keyword>
<keyword id="KW-1003">Cell membrane</keyword>
<keyword id="KW-0472">Membrane</keyword>
<keyword id="KW-1185">Reference proteome</keyword>
<keyword id="KW-0812">Transmembrane</keyword>
<keyword id="KW-1133">Transmembrane helix</keyword>
<keyword id="KW-0813">Transport</keyword>
<gene>
    <name evidence="1" type="primary">btuC</name>
    <name type="ordered locus">SbBS512_E1915</name>
</gene>
<proteinExistence type="inferred from homology"/>